<comment type="function">
    <text evidence="1">NDH shuttles electrons from NAD(P)H:plastoquinone, via FMN and iron-sulfur (Fe-S) centers, to quinones in the photosynthetic chain and possibly in a chloroplast respiratory chain. The immediate electron acceptor for the enzyme in this species is believed to be plastoquinone. Couples the redox reaction to proton translocation, and thus conserves the redox energy in a proton gradient (By similarity).</text>
</comment>
<comment type="catalytic activity">
    <reaction>
        <text>a plastoquinone + NADH + (n+1) H(+)(in) = a plastoquinol + NAD(+) + n H(+)(out)</text>
        <dbReference type="Rhea" id="RHEA:42608"/>
        <dbReference type="Rhea" id="RHEA-COMP:9561"/>
        <dbReference type="Rhea" id="RHEA-COMP:9562"/>
        <dbReference type="ChEBI" id="CHEBI:15378"/>
        <dbReference type="ChEBI" id="CHEBI:17757"/>
        <dbReference type="ChEBI" id="CHEBI:57540"/>
        <dbReference type="ChEBI" id="CHEBI:57945"/>
        <dbReference type="ChEBI" id="CHEBI:62192"/>
    </reaction>
</comment>
<comment type="catalytic activity">
    <reaction>
        <text>a plastoquinone + NADPH + (n+1) H(+)(in) = a plastoquinol + NADP(+) + n H(+)(out)</text>
        <dbReference type="Rhea" id="RHEA:42612"/>
        <dbReference type="Rhea" id="RHEA-COMP:9561"/>
        <dbReference type="Rhea" id="RHEA-COMP:9562"/>
        <dbReference type="ChEBI" id="CHEBI:15378"/>
        <dbReference type="ChEBI" id="CHEBI:17757"/>
        <dbReference type="ChEBI" id="CHEBI:57783"/>
        <dbReference type="ChEBI" id="CHEBI:58349"/>
        <dbReference type="ChEBI" id="CHEBI:62192"/>
    </reaction>
</comment>
<comment type="subunit">
    <text evidence="1">NDH is composed of at least 16 different subunits, 5 of which are encoded in the nucleus.</text>
</comment>
<comment type="subcellular location">
    <subcellularLocation>
        <location evidence="1">Plastid</location>
        <location evidence="1">Organellar chromatophore thylakoid membrane</location>
        <topology evidence="1">Multi-pass membrane protein</topology>
    </subcellularLocation>
</comment>
<comment type="similarity">
    <text evidence="3">Belongs to the complex I subunit 5 family.</text>
</comment>
<proteinExistence type="inferred from homology"/>
<gene>
    <name type="primary">ndhF2</name>
    <name type="ordered locus">PCC_0915</name>
</gene>
<feature type="chain" id="PRO_0000360977" description="NAD(P)H-quinone oxidoreductase subunit 5, organellar chromatophore 2">
    <location>
        <begin position="1"/>
        <end position="618"/>
    </location>
</feature>
<feature type="transmembrane region" description="Helical" evidence="2">
    <location>
        <begin position="16"/>
        <end position="36"/>
    </location>
</feature>
<feature type="transmembrane region" description="Helical" evidence="2">
    <location>
        <begin position="43"/>
        <end position="63"/>
    </location>
</feature>
<feature type="transmembrane region" description="Helical" evidence="2">
    <location>
        <begin position="99"/>
        <end position="119"/>
    </location>
</feature>
<feature type="transmembrane region" description="Helical" evidence="2">
    <location>
        <begin position="129"/>
        <end position="149"/>
    </location>
</feature>
<feature type="transmembrane region" description="Helical" evidence="2">
    <location>
        <begin position="152"/>
        <end position="172"/>
    </location>
</feature>
<feature type="transmembrane region" description="Helical" evidence="2">
    <location>
        <begin position="190"/>
        <end position="210"/>
    </location>
</feature>
<feature type="transmembrane region" description="Helical" evidence="2">
    <location>
        <begin position="220"/>
        <end position="240"/>
    </location>
</feature>
<feature type="transmembrane region" description="Helical" evidence="2">
    <location>
        <begin position="267"/>
        <end position="287"/>
    </location>
</feature>
<feature type="transmembrane region" description="Helical" evidence="2">
    <location>
        <begin position="291"/>
        <end position="311"/>
    </location>
</feature>
<feature type="transmembrane region" description="Helical" evidence="2">
    <location>
        <begin position="318"/>
        <end position="335"/>
    </location>
</feature>
<feature type="transmembrane region" description="Helical" evidence="2">
    <location>
        <begin position="348"/>
        <end position="368"/>
    </location>
</feature>
<feature type="transmembrane region" description="Helical" evidence="2">
    <location>
        <begin position="390"/>
        <end position="410"/>
    </location>
</feature>
<feature type="transmembrane region" description="Helical" evidence="2">
    <location>
        <begin position="419"/>
        <end position="438"/>
    </location>
</feature>
<feature type="transmembrane region" description="Helical" evidence="2">
    <location>
        <begin position="461"/>
        <end position="481"/>
    </location>
</feature>
<feature type="transmembrane region" description="Helical" evidence="2">
    <location>
        <begin position="495"/>
        <end position="515"/>
    </location>
</feature>
<feature type="transmembrane region" description="Helical" evidence="2">
    <location>
        <begin position="553"/>
        <end position="573"/>
    </location>
</feature>
<feature type="transmembrane region" description="Helical" evidence="2">
    <location>
        <begin position="597"/>
        <end position="617"/>
    </location>
</feature>
<keyword id="KW-0472">Membrane</keyword>
<keyword id="KW-0520">NAD</keyword>
<keyword id="KW-0521">NADP</keyword>
<keyword id="KW-0994">Organellar chromatophore</keyword>
<keyword id="KW-0934">Plastid</keyword>
<keyword id="KW-0618">Plastoquinone</keyword>
<keyword id="KW-0874">Quinone</keyword>
<keyword id="KW-0793">Thylakoid</keyword>
<keyword id="KW-1278">Translocase</keyword>
<keyword id="KW-0812">Transmembrane</keyword>
<keyword id="KW-1133">Transmembrane helix</keyword>
<keyword id="KW-0813">Transport</keyword>
<evidence type="ECO:0000250" key="1"/>
<evidence type="ECO:0000255" key="2"/>
<evidence type="ECO:0000305" key="3"/>
<protein>
    <recommendedName>
        <fullName>NAD(P)H-quinone oxidoreductase subunit 5, organellar chromatophore 2</fullName>
        <ecNumber>7.1.1.-</ecNumber>
    </recommendedName>
    <alternativeName>
        <fullName>NAD(P)H dehydrogenase subunit 5 2</fullName>
    </alternativeName>
    <alternativeName>
        <fullName>NADH-plastoquinone oxidoreductase subunit 5 2</fullName>
    </alternativeName>
</protein>
<name>NU5C2_PAUCH</name>
<reference key="1">
    <citation type="journal article" date="2008" name="Curr. Biol.">
        <title>Chromatophore genome sequence of Paulinella sheds light on acquisition of photosynthesis by eukaryotes.</title>
        <authorList>
            <person name="Nowack E.C.M."/>
            <person name="Melkonian M."/>
            <person name="Gloeckner G."/>
        </authorList>
    </citation>
    <scope>NUCLEOTIDE SEQUENCE [LARGE SCALE GENOMIC DNA]</scope>
</reference>
<dbReference type="EC" id="7.1.1.-"/>
<dbReference type="EMBL" id="CP000815">
    <property type="protein sequence ID" value="ACB43324.1"/>
    <property type="molecule type" value="Genomic_DNA"/>
</dbReference>
<dbReference type="SMR" id="B1X5V5"/>
<dbReference type="GO" id="GO:0070118">
    <property type="term" value="C:organellar chromatophore thylakoid membrane"/>
    <property type="evidence" value="ECO:0007669"/>
    <property type="project" value="UniProtKB-SubCell"/>
</dbReference>
<dbReference type="GO" id="GO:0009536">
    <property type="term" value="C:plastid"/>
    <property type="evidence" value="ECO:0007669"/>
    <property type="project" value="UniProtKB-KW"/>
</dbReference>
<dbReference type="GO" id="GO:0008137">
    <property type="term" value="F:NADH dehydrogenase (ubiquinone) activity"/>
    <property type="evidence" value="ECO:0007669"/>
    <property type="project" value="InterPro"/>
</dbReference>
<dbReference type="GO" id="GO:0048038">
    <property type="term" value="F:quinone binding"/>
    <property type="evidence" value="ECO:0007669"/>
    <property type="project" value="UniProtKB-KW"/>
</dbReference>
<dbReference type="GO" id="GO:0042773">
    <property type="term" value="P:ATP synthesis coupled electron transport"/>
    <property type="evidence" value="ECO:0007669"/>
    <property type="project" value="InterPro"/>
</dbReference>
<dbReference type="GO" id="GO:0015990">
    <property type="term" value="P:electron transport coupled proton transport"/>
    <property type="evidence" value="ECO:0007669"/>
    <property type="project" value="TreeGrafter"/>
</dbReference>
<dbReference type="Gene3D" id="1.20.5.2700">
    <property type="match status" value="1"/>
</dbReference>
<dbReference type="InterPro" id="IPR001750">
    <property type="entry name" value="ND/Mrp_TM"/>
</dbReference>
<dbReference type="InterPro" id="IPR003945">
    <property type="entry name" value="NU5C-like"/>
</dbReference>
<dbReference type="InterPro" id="IPR010217">
    <property type="entry name" value="NU5C2"/>
</dbReference>
<dbReference type="InterPro" id="IPR001516">
    <property type="entry name" value="Proton_antipo_N"/>
</dbReference>
<dbReference type="NCBIfam" id="TIGR01960">
    <property type="entry name" value="ndhF3_CO2"/>
    <property type="match status" value="1"/>
</dbReference>
<dbReference type="NCBIfam" id="NF005633">
    <property type="entry name" value="PRK07390.1"/>
    <property type="match status" value="1"/>
</dbReference>
<dbReference type="PANTHER" id="PTHR42829">
    <property type="entry name" value="NADH-UBIQUINONE OXIDOREDUCTASE CHAIN 5"/>
    <property type="match status" value="1"/>
</dbReference>
<dbReference type="PANTHER" id="PTHR42829:SF2">
    <property type="entry name" value="NADH-UBIQUINONE OXIDOREDUCTASE CHAIN 5"/>
    <property type="match status" value="1"/>
</dbReference>
<dbReference type="Pfam" id="PF00361">
    <property type="entry name" value="Proton_antipo_M"/>
    <property type="match status" value="1"/>
</dbReference>
<dbReference type="Pfam" id="PF00662">
    <property type="entry name" value="Proton_antipo_N"/>
    <property type="match status" value="1"/>
</dbReference>
<dbReference type="PRINTS" id="PR01434">
    <property type="entry name" value="NADHDHGNASE5"/>
</dbReference>
<accession>B1X5V5</accession>
<organism>
    <name type="scientific">Paulinella chromatophora</name>
    <dbReference type="NCBI Taxonomy" id="39717"/>
    <lineage>
        <taxon>Eukaryota</taxon>
        <taxon>Sar</taxon>
        <taxon>Rhizaria</taxon>
        <taxon>Cercozoa</taxon>
        <taxon>Imbricatea</taxon>
        <taxon>Silicofilosea</taxon>
        <taxon>Euglyphida</taxon>
        <taxon>Paulinellidae</taxon>
        <taxon>Paulinella</taxon>
    </lineage>
</organism>
<sequence>MSLSTVLSLSTQFAWLIPIYGFAGMVVSLPWATGWIQRNAPRTPAYLNLIISLVAFLHGSLALQDVLQNGAHIIRFPWLNLSQADLQLNISLDISPTNLAALELITGLSFIAQLYALGYLDKEWALARFFALAGFFEGAMSGVVLSDSLFQSYFLLEMLTLSTYLLVGFWYAQPLVVTAARDAFLTKRVGDVMLLMGVVALSAFAGGMEFEDLYTWADKNTLTPLATTLLGLALIAGPIGKCAQFPMHLWLDEAMEGPNPASILRNSVVVTCGAIVLMKLMPILHHSQITIAVLLAIGTISALGGSLVSIAQVDIKRTLSYSTTAYLGLVFIAIALEQPALALLTLFAHAIAKALLSMSIGSVIAVSNCQDITELGGLGSRMPATTSAYLIAGAGLTGLLPLGCFWCFGLGMDLIGRQAPWFASIYLITNTLTALNLTRVFRQVFLGAPMPKTRRAAEVNWQMALPMVVLLVAVALTPWMMARIDPLPGIGAFSAITGITVATSGLVGLTIGAIVPLNKAWSRSLNQPVRWVQDLLAFDFYTDRFYRLTIVNIVSGCSYIASWFDTAIVNGFVNYVGRFSMDSAEGLRLSISGRSQSYILTVVITIVFLLAALSWLVS</sequence>
<geneLocation type="organellar chromatophore"/>